<reference key="1">
    <citation type="journal article" date="1997" name="Nature">
        <title>The complete genome sequence of the hyperthermophilic, sulphate-reducing archaeon Archaeoglobus fulgidus.</title>
        <authorList>
            <person name="Klenk H.-P."/>
            <person name="Clayton R.A."/>
            <person name="Tomb J.-F."/>
            <person name="White O."/>
            <person name="Nelson K.E."/>
            <person name="Ketchum K.A."/>
            <person name="Dodson R.J."/>
            <person name="Gwinn M.L."/>
            <person name="Hickey E.K."/>
            <person name="Peterson J.D."/>
            <person name="Richardson D.L."/>
            <person name="Kerlavage A.R."/>
            <person name="Graham D.E."/>
            <person name="Kyrpides N.C."/>
            <person name="Fleischmann R.D."/>
            <person name="Quackenbush J."/>
            <person name="Lee N.H."/>
            <person name="Sutton G.G."/>
            <person name="Gill S.R."/>
            <person name="Kirkness E.F."/>
            <person name="Dougherty B.A."/>
            <person name="McKenney K."/>
            <person name="Adams M.D."/>
            <person name="Loftus B.J."/>
            <person name="Peterson S.N."/>
            <person name="Reich C.I."/>
            <person name="McNeil L.K."/>
            <person name="Badger J.H."/>
            <person name="Glodek A."/>
            <person name="Zhou L."/>
            <person name="Overbeek R."/>
            <person name="Gocayne J.D."/>
            <person name="Weidman J.F."/>
            <person name="McDonald L.A."/>
            <person name="Utterback T.R."/>
            <person name="Cotton M.D."/>
            <person name="Spriggs T."/>
            <person name="Artiach P."/>
            <person name="Kaine B.P."/>
            <person name="Sykes S.M."/>
            <person name="Sadow P.W."/>
            <person name="D'Andrea K.P."/>
            <person name="Bowman C."/>
            <person name="Fujii C."/>
            <person name="Garland S.A."/>
            <person name="Mason T.M."/>
            <person name="Olsen G.J."/>
            <person name="Fraser C.M."/>
            <person name="Smith H.O."/>
            <person name="Woese C.R."/>
            <person name="Venter J.C."/>
        </authorList>
    </citation>
    <scope>NUCLEOTIDE SEQUENCE [LARGE SCALE GENOMIC DNA]</scope>
    <source>
        <strain>ATCC 49558 / DSM 4304 / JCM 9628 / NBRC 100126 / VC-16</strain>
    </source>
</reference>
<feature type="chain" id="PRO_0000138103" description="UPF0104 membrane protein AF_2231">
    <location>
        <begin position="1"/>
        <end position="328"/>
    </location>
</feature>
<feature type="transmembrane region" description="Helical" evidence="1">
    <location>
        <begin position="31"/>
        <end position="51"/>
    </location>
</feature>
<feature type="transmembrane region" description="Helical" evidence="1">
    <location>
        <begin position="116"/>
        <end position="136"/>
    </location>
</feature>
<feature type="transmembrane region" description="Helical" evidence="1">
    <location>
        <begin position="139"/>
        <end position="159"/>
    </location>
</feature>
<feature type="transmembrane region" description="Helical" evidence="1">
    <location>
        <begin position="221"/>
        <end position="241"/>
    </location>
</feature>
<feature type="transmembrane region" description="Helical" evidence="1">
    <location>
        <begin position="245"/>
        <end position="265"/>
    </location>
</feature>
<feature type="transmembrane region" description="Helical" evidence="1">
    <location>
        <begin position="277"/>
        <end position="297"/>
    </location>
</feature>
<protein>
    <recommendedName>
        <fullName>UPF0104 membrane protein AF_2231</fullName>
    </recommendedName>
</protein>
<dbReference type="EMBL" id="AE000782">
    <property type="protein sequence ID" value="AAB89024.1"/>
    <property type="molecule type" value="Genomic_DNA"/>
</dbReference>
<dbReference type="PIR" id="G69528">
    <property type="entry name" value="G69528"/>
</dbReference>
<dbReference type="SMR" id="O28052"/>
<dbReference type="STRING" id="224325.AF_2231"/>
<dbReference type="PaxDb" id="224325-AF_2231"/>
<dbReference type="EnsemblBacteria" id="AAB89024">
    <property type="protein sequence ID" value="AAB89024"/>
    <property type="gene ID" value="AF_2231"/>
</dbReference>
<dbReference type="KEGG" id="afu:AF_2231"/>
<dbReference type="eggNOG" id="arCOG00899">
    <property type="taxonomic scope" value="Archaea"/>
</dbReference>
<dbReference type="HOGENOM" id="CLU_039146_1_0_2"/>
<dbReference type="OrthoDB" id="15513at2157"/>
<dbReference type="PhylomeDB" id="O28052"/>
<dbReference type="Proteomes" id="UP000002199">
    <property type="component" value="Chromosome"/>
</dbReference>
<dbReference type="GO" id="GO:0005886">
    <property type="term" value="C:plasma membrane"/>
    <property type="evidence" value="ECO:0007669"/>
    <property type="project" value="UniProtKB-SubCell"/>
</dbReference>
<dbReference type="InterPro" id="IPR022791">
    <property type="entry name" value="L-PG_synthase/AglD"/>
</dbReference>
<dbReference type="NCBIfam" id="TIGR00374">
    <property type="entry name" value="flippase-like domain"/>
    <property type="match status" value="1"/>
</dbReference>
<dbReference type="PANTHER" id="PTHR37693:SF1">
    <property type="entry name" value="INTEGRAL MEMBRANE PROTEIN"/>
    <property type="match status" value="1"/>
</dbReference>
<dbReference type="PANTHER" id="PTHR37693">
    <property type="entry name" value="PHOSPHATIDYLGLYCEROL LYSYLTRANSFERASE"/>
    <property type="match status" value="1"/>
</dbReference>
<dbReference type="Pfam" id="PF03706">
    <property type="entry name" value="LPG_synthase_TM"/>
    <property type="match status" value="1"/>
</dbReference>
<evidence type="ECO:0000255" key="1"/>
<evidence type="ECO:0000305" key="2"/>
<sequence>MIGILVSIAVTAIIFKYTESELTWSVIKRANWLLLIVAFLLQVSFWLLWALRMKLLSNYLGYRISFFHSLEITMASMFTASITPSSAGGEPVRVKMLSDRGVEVGTSAFIVLAERILDSMYFSTALPVFLIVTGFSTSFGFKIAIIFITLLLVFLYILYRIFRNESSIDKFAQLLYKAVRKFNEKKAEKYSSTFSRELRRFREATIKMLSDSPSGILVLYLVTLVMWSASFAIPSVILVALGYDAYFLYSYTAQLIIVIVSLVPLTPGSSGIAEVSMAYLYSNFVPTNVLGVLVGLWRLITYHTNIFFGAISVNYSLIKSKFVKNQLT</sequence>
<comment type="subcellular location">
    <subcellularLocation>
        <location evidence="2">Cell membrane</location>
        <topology evidence="2">Multi-pass membrane protein</topology>
    </subcellularLocation>
</comment>
<comment type="similarity">
    <text evidence="2">Belongs to the UPF0104 family.</text>
</comment>
<proteinExistence type="inferred from homology"/>
<gene>
    <name type="ordered locus">AF_2231</name>
</gene>
<organism>
    <name type="scientific">Archaeoglobus fulgidus (strain ATCC 49558 / DSM 4304 / JCM 9628 / NBRC 100126 / VC-16)</name>
    <dbReference type="NCBI Taxonomy" id="224325"/>
    <lineage>
        <taxon>Archaea</taxon>
        <taxon>Methanobacteriati</taxon>
        <taxon>Methanobacteriota</taxon>
        <taxon>Archaeoglobi</taxon>
        <taxon>Archaeoglobales</taxon>
        <taxon>Archaeoglobaceae</taxon>
        <taxon>Archaeoglobus</taxon>
    </lineage>
</organism>
<name>Y2231_ARCFU</name>
<accession>O28052</accession>
<keyword id="KW-1003">Cell membrane</keyword>
<keyword id="KW-0472">Membrane</keyword>
<keyword id="KW-1185">Reference proteome</keyword>
<keyword id="KW-0812">Transmembrane</keyword>
<keyword id="KW-1133">Transmembrane helix</keyword>